<reference key="1">
    <citation type="submission" date="2007-06" db="EMBL/GenBank/DDBJ databases">
        <authorList>
            <person name="Dodson R.J."/>
            <person name="Harkins D."/>
            <person name="Paulsen I.T."/>
        </authorList>
    </citation>
    <scope>NUCLEOTIDE SEQUENCE [LARGE SCALE GENOMIC DNA]</scope>
    <source>
        <strain>DSM 24068 / PA7</strain>
    </source>
</reference>
<comment type="function">
    <text evidence="1">Functions in the N-end rule pathway of protein degradation where it conjugates Leu, Phe and, less efficiently, Met from aminoacyl-tRNAs to the N-termini of proteins containing an N-terminal arginine or lysine.</text>
</comment>
<comment type="catalytic activity">
    <reaction evidence="1">
        <text>N-terminal L-lysyl-[protein] + L-leucyl-tRNA(Leu) = N-terminal L-leucyl-L-lysyl-[protein] + tRNA(Leu) + H(+)</text>
        <dbReference type="Rhea" id="RHEA:12340"/>
        <dbReference type="Rhea" id="RHEA-COMP:9613"/>
        <dbReference type="Rhea" id="RHEA-COMP:9622"/>
        <dbReference type="Rhea" id="RHEA-COMP:12670"/>
        <dbReference type="Rhea" id="RHEA-COMP:12671"/>
        <dbReference type="ChEBI" id="CHEBI:15378"/>
        <dbReference type="ChEBI" id="CHEBI:65249"/>
        <dbReference type="ChEBI" id="CHEBI:78442"/>
        <dbReference type="ChEBI" id="CHEBI:78494"/>
        <dbReference type="ChEBI" id="CHEBI:133043"/>
        <dbReference type="EC" id="2.3.2.6"/>
    </reaction>
</comment>
<comment type="catalytic activity">
    <reaction evidence="1">
        <text>N-terminal L-arginyl-[protein] + L-leucyl-tRNA(Leu) = N-terminal L-leucyl-L-arginyl-[protein] + tRNA(Leu) + H(+)</text>
        <dbReference type="Rhea" id="RHEA:50416"/>
        <dbReference type="Rhea" id="RHEA-COMP:9613"/>
        <dbReference type="Rhea" id="RHEA-COMP:9622"/>
        <dbReference type="Rhea" id="RHEA-COMP:12672"/>
        <dbReference type="Rhea" id="RHEA-COMP:12673"/>
        <dbReference type="ChEBI" id="CHEBI:15378"/>
        <dbReference type="ChEBI" id="CHEBI:64719"/>
        <dbReference type="ChEBI" id="CHEBI:78442"/>
        <dbReference type="ChEBI" id="CHEBI:78494"/>
        <dbReference type="ChEBI" id="CHEBI:133044"/>
        <dbReference type="EC" id="2.3.2.6"/>
    </reaction>
</comment>
<comment type="catalytic activity">
    <reaction evidence="1">
        <text>L-phenylalanyl-tRNA(Phe) + an N-terminal L-alpha-aminoacyl-[protein] = an N-terminal L-phenylalanyl-L-alpha-aminoacyl-[protein] + tRNA(Phe)</text>
        <dbReference type="Rhea" id="RHEA:43632"/>
        <dbReference type="Rhea" id="RHEA-COMP:9668"/>
        <dbReference type="Rhea" id="RHEA-COMP:9699"/>
        <dbReference type="Rhea" id="RHEA-COMP:10636"/>
        <dbReference type="Rhea" id="RHEA-COMP:10637"/>
        <dbReference type="ChEBI" id="CHEBI:78442"/>
        <dbReference type="ChEBI" id="CHEBI:78531"/>
        <dbReference type="ChEBI" id="CHEBI:78597"/>
        <dbReference type="ChEBI" id="CHEBI:83561"/>
        <dbReference type="EC" id="2.3.2.6"/>
    </reaction>
</comment>
<comment type="subcellular location">
    <subcellularLocation>
        <location evidence="1">Cytoplasm</location>
    </subcellularLocation>
</comment>
<comment type="similarity">
    <text evidence="1">Belongs to the L/F-transferase family.</text>
</comment>
<proteinExistence type="inferred from homology"/>
<dbReference type="EC" id="2.3.2.6" evidence="1"/>
<dbReference type="EMBL" id="CP000744">
    <property type="protein sequence ID" value="ABR84097.1"/>
    <property type="molecule type" value="Genomic_DNA"/>
</dbReference>
<dbReference type="RefSeq" id="WP_012075455.1">
    <property type="nucleotide sequence ID" value="NC_009656.1"/>
</dbReference>
<dbReference type="SMR" id="A6V4G9"/>
<dbReference type="KEGG" id="pap:PSPA7_2590"/>
<dbReference type="HOGENOM" id="CLU_075045_0_0_6"/>
<dbReference type="Proteomes" id="UP000001582">
    <property type="component" value="Chromosome"/>
</dbReference>
<dbReference type="GO" id="GO:0005737">
    <property type="term" value="C:cytoplasm"/>
    <property type="evidence" value="ECO:0007669"/>
    <property type="project" value="UniProtKB-SubCell"/>
</dbReference>
<dbReference type="GO" id="GO:0008914">
    <property type="term" value="F:leucyl-tRNA--protein transferase activity"/>
    <property type="evidence" value="ECO:0007669"/>
    <property type="project" value="UniProtKB-UniRule"/>
</dbReference>
<dbReference type="GO" id="GO:0030163">
    <property type="term" value="P:protein catabolic process"/>
    <property type="evidence" value="ECO:0007669"/>
    <property type="project" value="UniProtKB-UniRule"/>
</dbReference>
<dbReference type="FunFam" id="3.30.70.3550:FF:000001">
    <property type="entry name" value="Leucyl/phenylalanyl-tRNA--protein transferase"/>
    <property type="match status" value="1"/>
</dbReference>
<dbReference type="FunFam" id="3.40.630.70:FF:000001">
    <property type="entry name" value="Leucyl/phenylalanyl-tRNA--protein transferase"/>
    <property type="match status" value="1"/>
</dbReference>
<dbReference type="Gene3D" id="3.40.630.70">
    <property type="entry name" value="Leucyl/phenylalanyl-tRNA-protein transferase, C-terminal domain"/>
    <property type="match status" value="1"/>
</dbReference>
<dbReference type="Gene3D" id="3.30.70.3550">
    <property type="entry name" value="Leucyl/phenylalanyl-tRNA-protein transferase, N-terminal domain"/>
    <property type="match status" value="1"/>
</dbReference>
<dbReference type="HAMAP" id="MF_00688">
    <property type="entry name" value="Leu_Phe_trans"/>
    <property type="match status" value="1"/>
</dbReference>
<dbReference type="InterPro" id="IPR016181">
    <property type="entry name" value="Acyl_CoA_acyltransferase"/>
</dbReference>
<dbReference type="InterPro" id="IPR004616">
    <property type="entry name" value="Leu/Phe-tRNA_Trfase"/>
</dbReference>
<dbReference type="InterPro" id="IPR042203">
    <property type="entry name" value="Leu/Phe-tRNA_Trfase_C"/>
</dbReference>
<dbReference type="InterPro" id="IPR042221">
    <property type="entry name" value="Leu/Phe-tRNA_Trfase_N"/>
</dbReference>
<dbReference type="NCBIfam" id="TIGR00667">
    <property type="entry name" value="aat"/>
    <property type="match status" value="1"/>
</dbReference>
<dbReference type="PANTHER" id="PTHR30098">
    <property type="entry name" value="LEUCYL/PHENYLALANYL-TRNA--PROTEIN TRANSFERASE"/>
    <property type="match status" value="1"/>
</dbReference>
<dbReference type="PANTHER" id="PTHR30098:SF2">
    <property type="entry name" value="LEUCYL_PHENYLALANYL-TRNA--PROTEIN TRANSFERASE"/>
    <property type="match status" value="1"/>
</dbReference>
<dbReference type="Pfam" id="PF03588">
    <property type="entry name" value="Leu_Phe_trans"/>
    <property type="match status" value="1"/>
</dbReference>
<dbReference type="SUPFAM" id="SSF55729">
    <property type="entry name" value="Acyl-CoA N-acyltransferases (Nat)"/>
    <property type="match status" value="1"/>
</dbReference>
<evidence type="ECO:0000255" key="1">
    <source>
        <dbReference type="HAMAP-Rule" id="MF_00688"/>
    </source>
</evidence>
<accession>A6V4G9</accession>
<keyword id="KW-0012">Acyltransferase</keyword>
<keyword id="KW-0963">Cytoplasm</keyword>
<keyword id="KW-0808">Transferase</keyword>
<gene>
    <name evidence="1" type="primary">aat</name>
    <name type="ordered locus">PSPA7_2590</name>
</gene>
<name>LFTR_PSEP7</name>
<feature type="chain" id="PRO_1000045110" description="Leucyl/phenylalanyl-tRNA--protein transferase">
    <location>
        <begin position="1"/>
        <end position="226"/>
    </location>
</feature>
<sequence length="226" mass="25671">MLTWLSRTNYDFPPLDKALQEPNGLLAAGGDLDPRRLIAAYRHGCFPWYQDGQPILWWSPDPRTVLLPEELHVSRSLAKCLRQQRFEVTFNRDFRAVIQACAAPRDYADGTWITTPMQLAYQELHLRGVAHSVEVWQAGQLVGGLYGLAMGRLFFGESMFSRADNASKVGFVTLVRHLRDAGFVLIDCQMPTRHLHSLGARAISREAFADYLQRYRDESPSGTLDF</sequence>
<organism>
    <name type="scientific">Pseudomonas paraeruginosa (strain DSM 24068 / PA7)</name>
    <name type="common">Pseudomonas aeruginosa (strain PA7)</name>
    <dbReference type="NCBI Taxonomy" id="381754"/>
    <lineage>
        <taxon>Bacteria</taxon>
        <taxon>Pseudomonadati</taxon>
        <taxon>Pseudomonadota</taxon>
        <taxon>Gammaproteobacteria</taxon>
        <taxon>Pseudomonadales</taxon>
        <taxon>Pseudomonadaceae</taxon>
        <taxon>Pseudomonas</taxon>
        <taxon>Pseudomonas paraeruginosa</taxon>
    </lineage>
</organism>
<protein>
    <recommendedName>
        <fullName evidence="1">Leucyl/phenylalanyl-tRNA--protein transferase</fullName>
        <ecNumber evidence="1">2.3.2.6</ecNumber>
    </recommendedName>
    <alternativeName>
        <fullName evidence="1">L/F-transferase</fullName>
    </alternativeName>
    <alternativeName>
        <fullName evidence="1">Leucyltransferase</fullName>
    </alternativeName>
    <alternativeName>
        <fullName evidence="1">Phenyalanyltransferase</fullName>
    </alternativeName>
</protein>